<gene>
    <name evidence="1" type="primary">yabA</name>
    <name type="ordered locus">BCG9842_B5278</name>
</gene>
<protein>
    <recommendedName>
        <fullName evidence="1">Replication initiation control protein YabA</fullName>
    </recommendedName>
</protein>
<organism>
    <name type="scientific">Bacillus cereus (strain G9842)</name>
    <dbReference type="NCBI Taxonomy" id="405531"/>
    <lineage>
        <taxon>Bacteria</taxon>
        <taxon>Bacillati</taxon>
        <taxon>Bacillota</taxon>
        <taxon>Bacilli</taxon>
        <taxon>Bacillales</taxon>
        <taxon>Bacillaceae</taxon>
        <taxon>Bacillus</taxon>
        <taxon>Bacillus cereus group</taxon>
    </lineage>
</organism>
<evidence type="ECO:0000255" key="1">
    <source>
        <dbReference type="HAMAP-Rule" id="MF_01159"/>
    </source>
</evidence>
<evidence type="ECO:0000256" key="2">
    <source>
        <dbReference type="SAM" id="MobiDB-lite"/>
    </source>
</evidence>
<reference key="1">
    <citation type="submission" date="2008-10" db="EMBL/GenBank/DDBJ databases">
        <title>Genome sequence of Bacillus cereus G9842.</title>
        <authorList>
            <person name="Dodson R.J."/>
            <person name="Durkin A.S."/>
            <person name="Rosovitz M.J."/>
            <person name="Rasko D.A."/>
            <person name="Hoffmaster A."/>
            <person name="Ravel J."/>
            <person name="Sutton G."/>
        </authorList>
    </citation>
    <scope>NUCLEOTIDE SEQUENCE [LARGE SCALE GENOMIC DNA]</scope>
    <source>
        <strain>G9842</strain>
    </source>
</reference>
<proteinExistence type="inferred from homology"/>
<dbReference type="EMBL" id="CP001186">
    <property type="protein sequence ID" value="ACK93360.1"/>
    <property type="molecule type" value="Genomic_DNA"/>
</dbReference>
<dbReference type="RefSeq" id="WP_000412063.1">
    <property type="nucleotide sequence ID" value="NC_011772.1"/>
</dbReference>
<dbReference type="SMR" id="B7ISU3"/>
<dbReference type="GeneID" id="72446834"/>
<dbReference type="KEGG" id="bcg:BCG9842_B5278"/>
<dbReference type="HOGENOM" id="CLU_157169_0_0_9"/>
<dbReference type="Proteomes" id="UP000006744">
    <property type="component" value="Chromosome"/>
</dbReference>
<dbReference type="GO" id="GO:0009295">
    <property type="term" value="C:nucleoid"/>
    <property type="evidence" value="ECO:0007669"/>
    <property type="project" value="UniProtKB-SubCell"/>
</dbReference>
<dbReference type="GO" id="GO:0006260">
    <property type="term" value="P:DNA replication"/>
    <property type="evidence" value="ECO:0007669"/>
    <property type="project" value="UniProtKB-UniRule"/>
</dbReference>
<dbReference type="Gene3D" id="1.20.5.1160">
    <property type="entry name" value="Vasodilator-stimulated phosphoprotein"/>
    <property type="match status" value="1"/>
</dbReference>
<dbReference type="HAMAP" id="MF_01159">
    <property type="entry name" value="YabA"/>
    <property type="match status" value="1"/>
</dbReference>
<dbReference type="InterPro" id="IPR010377">
    <property type="entry name" value="YabA"/>
</dbReference>
<dbReference type="NCBIfam" id="NF009644">
    <property type="entry name" value="PRK13169.1-5"/>
    <property type="match status" value="1"/>
</dbReference>
<dbReference type="Pfam" id="PF06156">
    <property type="entry name" value="YabA"/>
    <property type="match status" value="1"/>
</dbReference>
<dbReference type="PIRSF" id="PIRSF021439">
    <property type="entry name" value="DUF972"/>
    <property type="match status" value="1"/>
</dbReference>
<comment type="function">
    <text evidence="1">Involved in control of chromosome replication initiation. Inhibits the cooperative binding of DnaA to the oriC region, thus negatively regulating initiation of chromosome replication. Inhibits the ability of DnaA-ATP to form a helix on DNA; does not disassemble preformed DnaA-DNA helices. Decreases the residence time of DnaA on the chromosome at its binding sites (oriC, replication forks and promoter-binding sites). Tethers DnaA to the replication machinery via the DNA polymerase beta sliding clamp subunit (dnaN). Associates with oriC and other DnaA targets on the chromosome in a DnaA-dependent manner.</text>
</comment>
<comment type="cofactor">
    <cofactor evidence="1">
        <name>Zn(2+)</name>
        <dbReference type="ChEBI" id="CHEBI:29105"/>
    </cofactor>
    <text evidence="1">Binds 1 zinc ion per subunit.</text>
</comment>
<comment type="subunit">
    <text evidence="1">Homotetramer. Interacts with both DnaA and DnaN, acting as a bridge between these two proteins.</text>
</comment>
<comment type="subcellular location">
    <subcellularLocation>
        <location evidence="1">Cytoplasm</location>
        <location evidence="1">Nucleoid</location>
    </subcellularLocation>
    <text evidence="1">Localizes in tight foci, which correspond to the replisome at mid-cell throughout the cell cycle.</text>
</comment>
<comment type="similarity">
    <text evidence="1">Belongs to the YabA family.</text>
</comment>
<sequence length="116" mass="13810">MEKKDIFESVSSMEEQIGHLYKQLGELKQHLAELLEENQHIKMENNNLRHRFEEVQNKEKQKTQKRKEVKPKTDIGEGYDNLARLYQEGFHICNLHYGSVRKEGDCLFCLSFLNKK</sequence>
<feature type="chain" id="PRO_1000137830" description="Replication initiation control protein YabA">
    <location>
        <begin position="1"/>
        <end position="116"/>
    </location>
</feature>
<feature type="region of interest" description="Disordered" evidence="2">
    <location>
        <begin position="52"/>
        <end position="73"/>
    </location>
</feature>
<feature type="compositionally biased region" description="Basic and acidic residues" evidence="2">
    <location>
        <begin position="52"/>
        <end position="62"/>
    </location>
</feature>
<feature type="binding site" evidence="1">
    <location>
        <position position="91"/>
    </location>
    <ligand>
        <name>Zn(2+)</name>
        <dbReference type="ChEBI" id="CHEBI:29105"/>
    </ligand>
</feature>
<feature type="binding site" evidence="1">
    <location>
        <position position="93"/>
    </location>
    <ligand>
        <name>Zn(2+)</name>
        <dbReference type="ChEBI" id="CHEBI:29105"/>
    </ligand>
</feature>
<feature type="binding site" evidence="1">
    <location>
        <position position="106"/>
    </location>
    <ligand>
        <name>Zn(2+)</name>
        <dbReference type="ChEBI" id="CHEBI:29105"/>
    </ligand>
</feature>
<feature type="binding site" evidence="1">
    <location>
        <position position="109"/>
    </location>
    <ligand>
        <name>Zn(2+)</name>
        <dbReference type="ChEBI" id="CHEBI:29105"/>
    </ligand>
</feature>
<keyword id="KW-0963">Cytoplasm</keyword>
<keyword id="KW-0235">DNA replication</keyword>
<keyword id="KW-0236">DNA replication inhibitor</keyword>
<keyword id="KW-0479">Metal-binding</keyword>
<keyword id="KW-0862">Zinc</keyword>
<accession>B7ISU3</accession>
<name>YABA_BACC2</name>